<keyword id="KW-0002">3D-structure</keyword>
<keyword id="KW-0963">Cytoplasm</keyword>
<keyword id="KW-0349">Heme</keyword>
<keyword id="KW-0408">Iron</keyword>
<keyword id="KW-0479">Metal-binding</keyword>
<keyword id="KW-0514">Muscle protein</keyword>
<keyword id="KW-0560">Oxidoreductase</keyword>
<keyword id="KW-0561">Oxygen transport</keyword>
<keyword id="KW-0813">Transport</keyword>
<sequence>MADFDAVLKCWGPVEADYTTIGGLVLTRLFKEHPETQKLFPKFAGIAQADIAGNAAVSAHGATVLKKLGELLKAKGSHAAILKPLANSHATKHKIPINNFKLISEVLVKVMHEKAGLDAGGQTALRNVMGIIIADLEANYKELGFSG</sequence>
<accession>P68190</accession>
<accession>Q9DD47</accession>
<name>MYG_THUOR</name>
<comment type="function">
    <text evidence="2">Monomeric heme protein which primary function is to store oxygen and facilitate its diffusion within muscle tissues. Reversibly binds oxygen through a pentacoordinated heme iron and enables its timely and efficient release as needed during periods of heightened demand. Depending on the oxidative conditions of tissues and cells, and in addition to its ability to bind oxygen, it also has a nitrite reductase activity whereby it regulates the production of bioactive nitric oxide. Under stress conditions, like hypoxia and anoxia, it also protects cells against reactive oxygen species thanks to its pseudoperoxidase activity.</text>
</comment>
<comment type="catalytic activity">
    <reaction evidence="2">
        <text>Fe(III)-heme b-[protein] + nitric oxide + H2O = Fe(II)-heme b-[protein] + nitrite + 2 H(+)</text>
        <dbReference type="Rhea" id="RHEA:77711"/>
        <dbReference type="Rhea" id="RHEA-COMP:18975"/>
        <dbReference type="Rhea" id="RHEA-COMP:18976"/>
        <dbReference type="ChEBI" id="CHEBI:15377"/>
        <dbReference type="ChEBI" id="CHEBI:15378"/>
        <dbReference type="ChEBI" id="CHEBI:16301"/>
        <dbReference type="ChEBI" id="CHEBI:16480"/>
        <dbReference type="ChEBI" id="CHEBI:55376"/>
        <dbReference type="ChEBI" id="CHEBI:60344"/>
    </reaction>
    <physiologicalReaction direction="right-to-left" evidence="2">
        <dbReference type="Rhea" id="RHEA:77713"/>
    </physiologicalReaction>
</comment>
<comment type="catalytic activity">
    <reaction evidence="2">
        <text>H2O2 + AH2 = A + 2 H2O</text>
        <dbReference type="Rhea" id="RHEA:30275"/>
        <dbReference type="ChEBI" id="CHEBI:13193"/>
        <dbReference type="ChEBI" id="CHEBI:15377"/>
        <dbReference type="ChEBI" id="CHEBI:16240"/>
        <dbReference type="ChEBI" id="CHEBI:17499"/>
    </reaction>
</comment>
<comment type="subunit">
    <text evidence="3">Monomeric.</text>
</comment>
<comment type="subcellular location">
    <subcellularLocation>
        <location evidence="2">Cytoplasm</location>
        <location evidence="2">Sarcoplasm</location>
    </subcellularLocation>
</comment>
<comment type="similarity">
    <text evidence="6">Belongs to the globin family.</text>
</comment>
<dbReference type="EC" id="1.7.-.-" evidence="2"/>
<dbReference type="EC" id="1.11.1.-" evidence="2"/>
<dbReference type="EMBL" id="AF291836">
    <property type="protein sequence ID" value="AAG02110.1"/>
    <property type="molecule type" value="mRNA"/>
</dbReference>
<dbReference type="PDB" id="2NRL">
    <property type="method" value="X-ray"/>
    <property type="resolution" value="0.91 A"/>
    <property type="chains" value="A=2-147"/>
</dbReference>
<dbReference type="PDB" id="2NX0">
    <property type="method" value="X-ray"/>
    <property type="resolution" value="0.95 A"/>
    <property type="chains" value="A=2-147"/>
</dbReference>
<dbReference type="PDBsum" id="2NRL"/>
<dbReference type="PDBsum" id="2NX0"/>
<dbReference type="SMR" id="P68190"/>
<dbReference type="EvolutionaryTrace" id="P68190"/>
<dbReference type="GO" id="GO:0070062">
    <property type="term" value="C:extracellular exosome"/>
    <property type="evidence" value="ECO:0007669"/>
    <property type="project" value="TreeGrafter"/>
</dbReference>
<dbReference type="GO" id="GO:0016528">
    <property type="term" value="C:sarcoplasm"/>
    <property type="evidence" value="ECO:0000250"/>
    <property type="project" value="UniProtKB"/>
</dbReference>
<dbReference type="GO" id="GO:0020037">
    <property type="term" value="F:heme binding"/>
    <property type="evidence" value="ECO:0007669"/>
    <property type="project" value="InterPro"/>
</dbReference>
<dbReference type="GO" id="GO:0046872">
    <property type="term" value="F:metal ion binding"/>
    <property type="evidence" value="ECO:0007669"/>
    <property type="project" value="UniProtKB-KW"/>
</dbReference>
<dbReference type="GO" id="GO:0098809">
    <property type="term" value="F:nitrite reductase activity"/>
    <property type="evidence" value="ECO:0000250"/>
    <property type="project" value="UniProtKB"/>
</dbReference>
<dbReference type="GO" id="GO:0019825">
    <property type="term" value="F:oxygen binding"/>
    <property type="evidence" value="ECO:0007669"/>
    <property type="project" value="InterPro"/>
</dbReference>
<dbReference type="GO" id="GO:0005344">
    <property type="term" value="F:oxygen carrier activity"/>
    <property type="evidence" value="ECO:0000250"/>
    <property type="project" value="UniProtKB"/>
</dbReference>
<dbReference type="GO" id="GO:0004601">
    <property type="term" value="F:peroxidase activity"/>
    <property type="evidence" value="ECO:0000250"/>
    <property type="project" value="UniProtKB"/>
</dbReference>
<dbReference type="GO" id="GO:0019430">
    <property type="term" value="P:removal of superoxide radicals"/>
    <property type="evidence" value="ECO:0000250"/>
    <property type="project" value="UniProtKB"/>
</dbReference>
<dbReference type="Gene3D" id="6.10.140.2100">
    <property type="match status" value="1"/>
</dbReference>
<dbReference type="Gene3D" id="6.10.140.2110">
    <property type="match status" value="1"/>
</dbReference>
<dbReference type="InterPro" id="IPR000971">
    <property type="entry name" value="Globin"/>
</dbReference>
<dbReference type="InterPro" id="IPR009050">
    <property type="entry name" value="Globin-like_sf"/>
</dbReference>
<dbReference type="InterPro" id="IPR002335">
    <property type="entry name" value="Myoglobin"/>
</dbReference>
<dbReference type="PANTHER" id="PTHR47132">
    <property type="entry name" value="MYOGLOBIN"/>
    <property type="match status" value="1"/>
</dbReference>
<dbReference type="PANTHER" id="PTHR47132:SF1">
    <property type="entry name" value="MYOGLOBIN"/>
    <property type="match status" value="1"/>
</dbReference>
<dbReference type="Pfam" id="PF00042">
    <property type="entry name" value="Globin"/>
    <property type="match status" value="1"/>
</dbReference>
<dbReference type="PRINTS" id="PR00613">
    <property type="entry name" value="MYOGLOBIN"/>
</dbReference>
<dbReference type="SUPFAM" id="SSF46458">
    <property type="entry name" value="Globin-like"/>
    <property type="match status" value="1"/>
</dbReference>
<dbReference type="PROSITE" id="PS01033">
    <property type="entry name" value="GLOBIN"/>
    <property type="match status" value="1"/>
</dbReference>
<evidence type="ECO:0000250" key="1"/>
<evidence type="ECO:0000250" key="2">
    <source>
        <dbReference type="UniProtKB" id="P02144"/>
    </source>
</evidence>
<evidence type="ECO:0000250" key="3">
    <source>
        <dbReference type="UniProtKB" id="P02185"/>
    </source>
</evidence>
<evidence type="ECO:0000250" key="4">
    <source>
        <dbReference type="UniProtKB" id="P02189"/>
    </source>
</evidence>
<evidence type="ECO:0000250" key="5">
    <source>
        <dbReference type="UniProtKB" id="P68082"/>
    </source>
</evidence>
<evidence type="ECO:0000255" key="6">
    <source>
        <dbReference type="PROSITE-ProRule" id="PRU00238"/>
    </source>
</evidence>
<evidence type="ECO:0007829" key="7">
    <source>
        <dbReference type="PDB" id="2NRL"/>
    </source>
</evidence>
<protein>
    <recommendedName>
        <fullName>Myoglobin</fullName>
    </recommendedName>
    <alternativeName>
        <fullName evidence="2">Nitrite reductase MB</fullName>
        <ecNumber evidence="2">1.7.-.-</ecNumber>
    </alternativeName>
    <alternativeName>
        <fullName evidence="2">Pseudoperoxidase MB</fullName>
        <ecNumber evidence="2">1.11.1.-</ecNumber>
    </alternativeName>
</protein>
<organism>
    <name type="scientific">Thunnus orientalis</name>
    <name type="common">North Pacific bluefin tuna</name>
    <name type="synonym">Thunnus thynnus orientalis</name>
    <dbReference type="NCBI Taxonomy" id="8238"/>
    <lineage>
        <taxon>Eukaryota</taxon>
        <taxon>Metazoa</taxon>
        <taxon>Chordata</taxon>
        <taxon>Craniata</taxon>
        <taxon>Vertebrata</taxon>
        <taxon>Euteleostomi</taxon>
        <taxon>Actinopterygii</taxon>
        <taxon>Neopterygii</taxon>
        <taxon>Teleostei</taxon>
        <taxon>Neoteleostei</taxon>
        <taxon>Acanthomorphata</taxon>
        <taxon>Pelagiaria</taxon>
        <taxon>Scombriformes</taxon>
        <taxon>Scombridae</taxon>
        <taxon>Thunnus</taxon>
    </lineage>
</organism>
<feature type="initiator methionine" description="Removed" evidence="1">
    <location>
        <position position="1"/>
    </location>
</feature>
<feature type="chain" id="PRO_0000053378" description="Myoglobin">
    <location>
        <begin position="2"/>
        <end position="147"/>
    </location>
</feature>
<feature type="domain" description="Globin" evidence="6">
    <location>
        <begin position="2"/>
        <end position="141"/>
    </location>
</feature>
<feature type="binding site" evidence="5">
    <location>
        <position position="60"/>
    </location>
    <ligand>
        <name>nitrite</name>
        <dbReference type="ChEBI" id="CHEBI:16301"/>
    </ligand>
</feature>
<feature type="binding site" evidence="4 6">
    <location>
        <position position="60"/>
    </location>
    <ligand>
        <name>O2</name>
        <dbReference type="ChEBI" id="CHEBI:15379"/>
    </ligand>
</feature>
<feature type="binding site" description="proximal binding residue" evidence="2">
    <location>
        <position position="89"/>
    </location>
    <ligand>
        <name>heme b</name>
        <dbReference type="ChEBI" id="CHEBI:60344"/>
    </ligand>
    <ligandPart>
        <name>Fe</name>
        <dbReference type="ChEBI" id="CHEBI:18248"/>
    </ligandPart>
</feature>
<feature type="helix" evidence="7">
    <location>
        <begin position="3"/>
        <end position="8"/>
    </location>
</feature>
<feature type="helix" evidence="7">
    <location>
        <begin position="12"/>
        <end position="15"/>
    </location>
</feature>
<feature type="helix" evidence="7">
    <location>
        <begin position="18"/>
        <end position="32"/>
    </location>
</feature>
<feature type="helix" evidence="7">
    <location>
        <begin position="34"/>
        <end position="37"/>
    </location>
</feature>
<feature type="turn" evidence="7">
    <location>
        <begin position="41"/>
        <end position="45"/>
    </location>
</feature>
<feature type="helix" evidence="7">
    <location>
        <begin position="48"/>
        <end position="50"/>
    </location>
</feature>
<feature type="turn" evidence="7">
    <location>
        <begin position="51"/>
        <end position="53"/>
    </location>
</feature>
<feature type="helix" evidence="7">
    <location>
        <begin position="55"/>
        <end position="73"/>
    </location>
</feature>
<feature type="helix" evidence="7">
    <location>
        <begin position="78"/>
        <end position="91"/>
    </location>
</feature>
<feature type="helix" evidence="7">
    <location>
        <begin position="98"/>
        <end position="114"/>
    </location>
</feature>
<feature type="helix" evidence="7">
    <location>
        <begin position="119"/>
        <end position="142"/>
    </location>
</feature>
<reference key="1">
    <citation type="journal article" date="2001" name="Am. J. Physiol.">
        <title>Oxygen affinity and amino acid sequence of myoglobins from endothermic and ectothermic fish.</title>
        <authorList>
            <person name="Marcinek D.J."/>
            <person name="Bonaventura J."/>
            <person name="Wittenberg J.B."/>
            <person name="Block B.A."/>
        </authorList>
    </citation>
    <scope>NUCLEOTIDE SEQUENCE [MRNA]</scope>
    <source>
        <tissue>Skeletal muscle</tissue>
    </source>
</reference>
<proteinExistence type="evidence at protein level"/>
<gene>
    <name type="primary">mb</name>
</gene>